<name>FABR_YERPG</name>
<organism>
    <name type="scientific">Yersinia pestis bv. Antiqua (strain Angola)</name>
    <dbReference type="NCBI Taxonomy" id="349746"/>
    <lineage>
        <taxon>Bacteria</taxon>
        <taxon>Pseudomonadati</taxon>
        <taxon>Pseudomonadota</taxon>
        <taxon>Gammaproteobacteria</taxon>
        <taxon>Enterobacterales</taxon>
        <taxon>Yersiniaceae</taxon>
        <taxon>Yersinia</taxon>
    </lineage>
</organism>
<accession>A9R6N6</accession>
<feature type="chain" id="PRO_1000138363" description="HTH-type transcriptional repressor FabR">
    <location>
        <begin position="1"/>
        <end position="211"/>
    </location>
</feature>
<feature type="domain" description="HTH tetR-type" evidence="1">
    <location>
        <begin position="10"/>
        <end position="70"/>
    </location>
</feature>
<feature type="DNA-binding region" description="H-T-H motif" evidence="1">
    <location>
        <begin position="33"/>
        <end position="52"/>
    </location>
</feature>
<keyword id="KW-0963">Cytoplasm</keyword>
<keyword id="KW-0238">DNA-binding</keyword>
<keyword id="KW-0275">Fatty acid biosynthesis</keyword>
<keyword id="KW-0276">Fatty acid metabolism</keyword>
<keyword id="KW-0444">Lipid biosynthesis</keyword>
<keyword id="KW-0443">Lipid metabolism</keyword>
<keyword id="KW-0678">Repressor</keyword>
<keyword id="KW-0804">Transcription</keyword>
<keyword id="KW-0805">Transcription regulation</keyword>
<comment type="function">
    <text evidence="1">Represses the transcription of fabB, involved in unsaturated fatty acid (UFA) biosynthesis. By controlling UFA production, FabR directly influences the physical properties of the membrane bilayer.</text>
</comment>
<comment type="subunit">
    <text evidence="1">Homodimer.</text>
</comment>
<comment type="subcellular location">
    <subcellularLocation>
        <location evidence="1">Cytoplasm</location>
    </subcellularLocation>
</comment>
<proteinExistence type="inferred from homology"/>
<gene>
    <name evidence="1" type="primary">fabR</name>
    <name type="ordered locus">YpAngola_A0120</name>
</gene>
<evidence type="ECO:0000255" key="1">
    <source>
        <dbReference type="HAMAP-Rule" id="MF_01190"/>
    </source>
</evidence>
<sequence length="211" mass="24167">MGVRAQQKERTRRSLIEAAFSQLSAERSFASLSLREVSREAGIAPTSFYRHFRDVDELGLTMVDESGLMLRQLMRQARQRIAKGGSVIRTSVSTFMEFIGNNPNAFRLLLRERSGTSAAFRAAVAREIQHFIAELADYLELENHMPRSFTEAQAEAMVTIVFSAGAEVLDVDIEQRRQLEERLVLQLRMISKGAYYWYRREQEKLAASRVE</sequence>
<reference key="1">
    <citation type="journal article" date="2010" name="J. Bacteriol.">
        <title>Genome sequence of the deep-rooted Yersinia pestis strain Angola reveals new insights into the evolution and pangenome of the plague bacterium.</title>
        <authorList>
            <person name="Eppinger M."/>
            <person name="Worsham P.L."/>
            <person name="Nikolich M.P."/>
            <person name="Riley D.R."/>
            <person name="Sebastian Y."/>
            <person name="Mou S."/>
            <person name="Achtman M."/>
            <person name="Lindler L.E."/>
            <person name="Ravel J."/>
        </authorList>
    </citation>
    <scope>NUCLEOTIDE SEQUENCE [LARGE SCALE GENOMIC DNA]</scope>
    <source>
        <strain>Angola</strain>
    </source>
</reference>
<protein>
    <recommendedName>
        <fullName evidence="1">HTH-type transcriptional repressor FabR</fullName>
    </recommendedName>
</protein>
<dbReference type="EMBL" id="CP000901">
    <property type="protein sequence ID" value="ABX87828.1"/>
    <property type="molecule type" value="Genomic_DNA"/>
</dbReference>
<dbReference type="RefSeq" id="WP_002209476.1">
    <property type="nucleotide sequence ID" value="NZ_CP009935.1"/>
</dbReference>
<dbReference type="SMR" id="A9R6N6"/>
<dbReference type="GeneID" id="96663601"/>
<dbReference type="KEGG" id="ypg:YpAngola_A0120"/>
<dbReference type="PATRIC" id="fig|349746.12.peg.1065"/>
<dbReference type="GO" id="GO:0005737">
    <property type="term" value="C:cytoplasm"/>
    <property type="evidence" value="ECO:0007669"/>
    <property type="project" value="UniProtKB-SubCell"/>
</dbReference>
<dbReference type="GO" id="GO:0003677">
    <property type="term" value="F:DNA binding"/>
    <property type="evidence" value="ECO:0007669"/>
    <property type="project" value="UniProtKB-KW"/>
</dbReference>
<dbReference type="GO" id="GO:0003700">
    <property type="term" value="F:DNA-binding transcription factor activity"/>
    <property type="evidence" value="ECO:0007669"/>
    <property type="project" value="UniProtKB-UniRule"/>
</dbReference>
<dbReference type="GO" id="GO:0006633">
    <property type="term" value="P:fatty acid biosynthetic process"/>
    <property type="evidence" value="ECO:0007669"/>
    <property type="project" value="UniProtKB-UniRule"/>
</dbReference>
<dbReference type="GO" id="GO:0045717">
    <property type="term" value="P:negative regulation of fatty acid biosynthetic process"/>
    <property type="evidence" value="ECO:0007669"/>
    <property type="project" value="UniProtKB-UniRule"/>
</dbReference>
<dbReference type="FunFam" id="1.10.10.60:FF:000034">
    <property type="entry name" value="HTH-type transcriptional repressor FabR"/>
    <property type="match status" value="1"/>
</dbReference>
<dbReference type="FunFam" id="1.10.357.10:FF:000001">
    <property type="entry name" value="HTH-type transcriptional repressor FabR"/>
    <property type="match status" value="1"/>
</dbReference>
<dbReference type="Gene3D" id="1.10.10.60">
    <property type="entry name" value="Homeodomain-like"/>
    <property type="match status" value="1"/>
</dbReference>
<dbReference type="Gene3D" id="1.10.357.10">
    <property type="entry name" value="Tetracycline Repressor, domain 2"/>
    <property type="match status" value="1"/>
</dbReference>
<dbReference type="HAMAP" id="MF_01190">
    <property type="entry name" value="HTH_type_FabR"/>
    <property type="match status" value="1"/>
</dbReference>
<dbReference type="InterPro" id="IPR054129">
    <property type="entry name" value="DesT_TetR_C"/>
</dbReference>
<dbReference type="InterPro" id="IPR009057">
    <property type="entry name" value="Homeodomain-like_sf"/>
</dbReference>
<dbReference type="InterPro" id="IPR001647">
    <property type="entry name" value="HTH_TetR"/>
</dbReference>
<dbReference type="InterPro" id="IPR050692">
    <property type="entry name" value="HTH_transcr_repressor_FabR"/>
</dbReference>
<dbReference type="InterPro" id="IPR023764">
    <property type="entry name" value="Tscrpt_reg_HTH_FabR"/>
</dbReference>
<dbReference type="NCBIfam" id="NF008402">
    <property type="entry name" value="PRK11202.1"/>
    <property type="match status" value="1"/>
</dbReference>
<dbReference type="PANTHER" id="PTHR47752">
    <property type="entry name" value="HTH-TYPE TRANSCRIPTIONAL REPRESSOR FABR"/>
    <property type="match status" value="1"/>
</dbReference>
<dbReference type="PANTHER" id="PTHR47752:SF1">
    <property type="entry name" value="HTH-TYPE TRANSCRIPTIONAL REPRESSOR FABR"/>
    <property type="match status" value="1"/>
</dbReference>
<dbReference type="Pfam" id="PF21943">
    <property type="entry name" value="TetR_C_46"/>
    <property type="match status" value="1"/>
</dbReference>
<dbReference type="Pfam" id="PF00440">
    <property type="entry name" value="TetR_N"/>
    <property type="match status" value="1"/>
</dbReference>
<dbReference type="SUPFAM" id="SSF46689">
    <property type="entry name" value="Homeodomain-like"/>
    <property type="match status" value="1"/>
</dbReference>
<dbReference type="PROSITE" id="PS50977">
    <property type="entry name" value="HTH_TETR_2"/>
    <property type="match status" value="1"/>
</dbReference>